<sequence length="329" mass="36329">MSAYIIETLIKILILVAVFSALGGFATYIERKVLAYFQRRLGPCYVGPFGLLQVAADGIKLFTKEDIIPQGANKFIFTLAPIIAMVSAFVSMAPIPFFPNFTLFGYEIKPLISDINIGFLFFLAVGAAGIYAPILAGLASNNKYSLIGSARATIQLLSFEVVSTLTILAPLMVVGSLSLVEINHYQSGGFLDWLVFKQPLAFVLFLIASYAELNRTPFDLLEHEAEIVAGYCTEYSGLKWGMFFLAEYAHLFAFSFVISIVFFGGFNAWGFIPGGLAILIKAGFFVFLSMWVRATYPHVRPDQLMDMCWKIMLPLALLNIVLTGIIILI</sequence>
<comment type="function">
    <text evidence="1">NDH-1 shuttles electrons from NADH, via FMN and iron-sulfur (Fe-S) centers, to quinones in the respiratory chain. The immediate electron acceptor for the enzyme in this species is believed to be ubiquinone. Couples the redox reaction to proton translocation (for every two electrons transferred, four hydrogen ions are translocated across the cytoplasmic membrane), and thus conserves the redox energy in a proton gradient. This subunit may bind ubiquinone.</text>
</comment>
<comment type="catalytic activity">
    <reaction evidence="1">
        <text>a quinone + NADH + 5 H(+)(in) = a quinol + NAD(+) + 4 H(+)(out)</text>
        <dbReference type="Rhea" id="RHEA:57888"/>
        <dbReference type="ChEBI" id="CHEBI:15378"/>
        <dbReference type="ChEBI" id="CHEBI:24646"/>
        <dbReference type="ChEBI" id="CHEBI:57540"/>
        <dbReference type="ChEBI" id="CHEBI:57945"/>
        <dbReference type="ChEBI" id="CHEBI:132124"/>
    </reaction>
</comment>
<comment type="subunit">
    <text evidence="1">NDH-1 is composed of 14 different subunits. Subunits NuoA, H, J, K, L, M, N constitute the membrane sector of the complex.</text>
</comment>
<comment type="subcellular location">
    <subcellularLocation>
        <location evidence="1">Cell inner membrane</location>
        <topology evidence="1">Multi-pass membrane protein</topology>
    </subcellularLocation>
</comment>
<comment type="similarity">
    <text evidence="1">Belongs to the complex I subunit 1 family.</text>
</comment>
<accession>B5Z8R2</accession>
<proteinExistence type="inferred from homology"/>
<gene>
    <name evidence="1" type="primary">nuoH</name>
    <name type="ordered locus">HPG27_1212</name>
</gene>
<dbReference type="EC" id="7.1.1.-" evidence="1"/>
<dbReference type="EMBL" id="CP001173">
    <property type="protein sequence ID" value="ACI27961.1"/>
    <property type="molecule type" value="Genomic_DNA"/>
</dbReference>
<dbReference type="RefSeq" id="WP_001277290.1">
    <property type="nucleotide sequence ID" value="NC_011333.1"/>
</dbReference>
<dbReference type="SMR" id="B5Z8R2"/>
<dbReference type="KEGG" id="hpg:HPG27_1212"/>
<dbReference type="HOGENOM" id="CLU_015134_0_1_7"/>
<dbReference type="Proteomes" id="UP000001735">
    <property type="component" value="Chromosome"/>
</dbReference>
<dbReference type="GO" id="GO:0005886">
    <property type="term" value="C:plasma membrane"/>
    <property type="evidence" value="ECO:0007669"/>
    <property type="project" value="UniProtKB-SubCell"/>
</dbReference>
<dbReference type="GO" id="GO:0003954">
    <property type="term" value="F:NADH dehydrogenase activity"/>
    <property type="evidence" value="ECO:0007669"/>
    <property type="project" value="TreeGrafter"/>
</dbReference>
<dbReference type="GO" id="GO:0016655">
    <property type="term" value="F:oxidoreductase activity, acting on NAD(P)H, quinone or similar compound as acceptor"/>
    <property type="evidence" value="ECO:0007669"/>
    <property type="project" value="UniProtKB-UniRule"/>
</dbReference>
<dbReference type="GO" id="GO:0048038">
    <property type="term" value="F:quinone binding"/>
    <property type="evidence" value="ECO:0007669"/>
    <property type="project" value="UniProtKB-KW"/>
</dbReference>
<dbReference type="GO" id="GO:0009060">
    <property type="term" value="P:aerobic respiration"/>
    <property type="evidence" value="ECO:0007669"/>
    <property type="project" value="TreeGrafter"/>
</dbReference>
<dbReference type="HAMAP" id="MF_01350">
    <property type="entry name" value="NDH1_NuoH"/>
    <property type="match status" value="1"/>
</dbReference>
<dbReference type="InterPro" id="IPR001694">
    <property type="entry name" value="NADH_UbQ_OxRdtase_su1/FPO"/>
</dbReference>
<dbReference type="InterPro" id="IPR018086">
    <property type="entry name" value="NADH_UbQ_OxRdtase_su1_CS"/>
</dbReference>
<dbReference type="NCBIfam" id="NF004741">
    <property type="entry name" value="PRK06076.1-2"/>
    <property type="match status" value="1"/>
</dbReference>
<dbReference type="PANTHER" id="PTHR11432">
    <property type="entry name" value="NADH DEHYDROGENASE SUBUNIT 1"/>
    <property type="match status" value="1"/>
</dbReference>
<dbReference type="PANTHER" id="PTHR11432:SF3">
    <property type="entry name" value="NADH-UBIQUINONE OXIDOREDUCTASE CHAIN 1"/>
    <property type="match status" value="1"/>
</dbReference>
<dbReference type="Pfam" id="PF00146">
    <property type="entry name" value="NADHdh"/>
    <property type="match status" value="1"/>
</dbReference>
<dbReference type="PROSITE" id="PS00667">
    <property type="entry name" value="COMPLEX1_ND1_1"/>
    <property type="match status" value="1"/>
</dbReference>
<reference key="1">
    <citation type="journal article" date="2009" name="J. Bacteriol.">
        <title>The complete genome sequence of Helicobacter pylori strain G27.</title>
        <authorList>
            <person name="Baltrus D.A."/>
            <person name="Amieva M.R."/>
            <person name="Covacci A."/>
            <person name="Lowe T.M."/>
            <person name="Merrell D.S."/>
            <person name="Ottemann K.M."/>
            <person name="Stein M."/>
            <person name="Salama N.R."/>
            <person name="Guillemin K."/>
        </authorList>
    </citation>
    <scope>NUCLEOTIDE SEQUENCE [LARGE SCALE GENOMIC DNA]</scope>
    <source>
        <strain>G27</strain>
    </source>
</reference>
<feature type="chain" id="PRO_1000143602" description="NADH-quinone oxidoreductase subunit H">
    <location>
        <begin position="1"/>
        <end position="329"/>
    </location>
</feature>
<feature type="transmembrane region" description="Helical" evidence="1">
    <location>
        <begin position="9"/>
        <end position="29"/>
    </location>
</feature>
<feature type="transmembrane region" description="Helical" evidence="1">
    <location>
        <begin position="42"/>
        <end position="62"/>
    </location>
</feature>
<feature type="transmembrane region" description="Helical" evidence="1">
    <location>
        <begin position="75"/>
        <end position="95"/>
    </location>
</feature>
<feature type="transmembrane region" description="Helical" evidence="1">
    <location>
        <begin position="117"/>
        <end position="137"/>
    </location>
</feature>
<feature type="transmembrane region" description="Helical" evidence="1">
    <location>
        <begin position="154"/>
        <end position="174"/>
    </location>
</feature>
<feature type="transmembrane region" description="Helical" evidence="1">
    <location>
        <begin position="188"/>
        <end position="208"/>
    </location>
</feature>
<feature type="transmembrane region" description="Helical" evidence="1">
    <location>
        <begin position="238"/>
        <end position="258"/>
    </location>
</feature>
<feature type="transmembrane region" description="Helical" evidence="1">
    <location>
        <begin position="260"/>
        <end position="280"/>
    </location>
</feature>
<feature type="transmembrane region" description="Helical" evidence="1">
    <location>
        <begin position="309"/>
        <end position="329"/>
    </location>
</feature>
<organism>
    <name type="scientific">Helicobacter pylori (strain G27)</name>
    <dbReference type="NCBI Taxonomy" id="563041"/>
    <lineage>
        <taxon>Bacteria</taxon>
        <taxon>Pseudomonadati</taxon>
        <taxon>Campylobacterota</taxon>
        <taxon>Epsilonproteobacteria</taxon>
        <taxon>Campylobacterales</taxon>
        <taxon>Helicobacteraceae</taxon>
        <taxon>Helicobacter</taxon>
    </lineage>
</organism>
<protein>
    <recommendedName>
        <fullName evidence="1">NADH-quinone oxidoreductase subunit H</fullName>
        <ecNumber evidence="1">7.1.1.-</ecNumber>
    </recommendedName>
    <alternativeName>
        <fullName evidence="1">NADH dehydrogenase I subunit H</fullName>
    </alternativeName>
    <alternativeName>
        <fullName evidence="1">NDH-1 subunit H</fullName>
    </alternativeName>
</protein>
<evidence type="ECO:0000255" key="1">
    <source>
        <dbReference type="HAMAP-Rule" id="MF_01350"/>
    </source>
</evidence>
<name>NUOH_HELPG</name>
<keyword id="KW-0997">Cell inner membrane</keyword>
<keyword id="KW-1003">Cell membrane</keyword>
<keyword id="KW-0472">Membrane</keyword>
<keyword id="KW-0520">NAD</keyword>
<keyword id="KW-0874">Quinone</keyword>
<keyword id="KW-1185">Reference proteome</keyword>
<keyword id="KW-1278">Translocase</keyword>
<keyword id="KW-0812">Transmembrane</keyword>
<keyword id="KW-1133">Transmembrane helix</keyword>
<keyword id="KW-0830">Ubiquinone</keyword>